<keyword id="KW-0004">4Fe-4S</keyword>
<keyword id="KW-0007">Acetylation</keyword>
<keyword id="KW-0067">ATP-binding</keyword>
<keyword id="KW-0966">Cell projection</keyword>
<keyword id="KW-0969">Cilium</keyword>
<keyword id="KW-0970">Cilium biogenesis/degradation</keyword>
<keyword id="KW-0963">Cytoplasm</keyword>
<keyword id="KW-0206">Cytoskeleton</keyword>
<keyword id="KW-0408">Iron</keyword>
<keyword id="KW-0411">Iron-sulfur</keyword>
<keyword id="KW-0479">Metal-binding</keyword>
<keyword id="KW-0547">Nucleotide-binding</keyword>
<keyword id="KW-0539">Nucleus</keyword>
<keyword id="KW-1185">Reference proteome</keyword>
<accession>Q3MHY6</accession>
<protein>
    <recommendedName>
        <fullName evidence="3">Cytosolic Fe-S cluster assembly factor NUBP2</fullName>
    </recommendedName>
    <alternativeName>
        <fullName evidence="3">Nucleotide-binding protein 2</fullName>
        <shortName evidence="3">NBP 2</shortName>
    </alternativeName>
</protein>
<sequence>MEAAAEPGNLAGVRHIVLVLSGKGGVGKSTISTELALALRHAGKKVGILDVDLCGPSIPRMLRAQGRAVHQGDSGWVPVFVDREQSISLMSVGFLLEQPDEAVVWRGPKKNALIKQFVSDVAWGQLDYLLVDTPPGTSDEHMAVVDALRPHSPLGALVVTTPQAVSVGDVRRELTFCRKVGLRVIGLVENMSGFVCPHCSECTNVFSKGGGEELARHAGVPFLGSVPLDPELTRSLEDGRDFIQDFPDSPAFPALSSIAQKILSETPAGLS</sequence>
<dbReference type="EMBL" id="BC104526">
    <property type="protein sequence ID" value="AAI04527.1"/>
    <property type="molecule type" value="mRNA"/>
</dbReference>
<dbReference type="RefSeq" id="NP_001029677.1">
    <property type="nucleotide sequence ID" value="NM_001034505.1"/>
</dbReference>
<dbReference type="SMR" id="Q3MHY6"/>
<dbReference type="FunCoup" id="Q3MHY6">
    <property type="interactions" value="1240"/>
</dbReference>
<dbReference type="STRING" id="9913.ENSBTAP00000059432"/>
<dbReference type="PaxDb" id="9913-ENSBTAP00000022029"/>
<dbReference type="GeneID" id="515660"/>
<dbReference type="KEGG" id="bta:515660"/>
<dbReference type="CTD" id="10101"/>
<dbReference type="VEuPathDB" id="HostDB:ENSBTAG00000016561"/>
<dbReference type="eggNOG" id="KOG3022">
    <property type="taxonomic scope" value="Eukaryota"/>
</dbReference>
<dbReference type="HOGENOM" id="CLU_024839_0_1_1"/>
<dbReference type="InParanoid" id="Q3MHY6"/>
<dbReference type="OMA" id="WIPVFAD"/>
<dbReference type="OrthoDB" id="1741334at2759"/>
<dbReference type="TreeFam" id="TF354321"/>
<dbReference type="Proteomes" id="UP000009136">
    <property type="component" value="Chromosome 25"/>
</dbReference>
<dbReference type="Bgee" id="ENSBTAG00000016561">
    <property type="expression patterns" value="Expressed in retina and 106 other cell types or tissues"/>
</dbReference>
<dbReference type="GO" id="GO:0005814">
    <property type="term" value="C:centriole"/>
    <property type="evidence" value="ECO:0007669"/>
    <property type="project" value="UniProtKB-SubCell"/>
</dbReference>
<dbReference type="GO" id="GO:0005813">
    <property type="term" value="C:centrosome"/>
    <property type="evidence" value="ECO:0007669"/>
    <property type="project" value="UniProtKB-SubCell"/>
</dbReference>
<dbReference type="GO" id="GO:0005929">
    <property type="term" value="C:cilium"/>
    <property type="evidence" value="ECO:0007669"/>
    <property type="project" value="UniProtKB-KW"/>
</dbReference>
<dbReference type="GO" id="GO:0005829">
    <property type="term" value="C:cytosol"/>
    <property type="evidence" value="ECO:0000318"/>
    <property type="project" value="GO_Central"/>
</dbReference>
<dbReference type="GO" id="GO:0005634">
    <property type="term" value="C:nucleus"/>
    <property type="evidence" value="ECO:0007669"/>
    <property type="project" value="UniProtKB-SubCell"/>
</dbReference>
<dbReference type="GO" id="GO:0051539">
    <property type="term" value="F:4 iron, 4 sulfur cluster binding"/>
    <property type="evidence" value="ECO:0007669"/>
    <property type="project" value="UniProtKB-UniRule"/>
</dbReference>
<dbReference type="GO" id="GO:0005524">
    <property type="term" value="F:ATP binding"/>
    <property type="evidence" value="ECO:0007669"/>
    <property type="project" value="UniProtKB-KW"/>
</dbReference>
<dbReference type="GO" id="GO:0140663">
    <property type="term" value="F:ATP-dependent FeS chaperone activity"/>
    <property type="evidence" value="ECO:0007669"/>
    <property type="project" value="InterPro"/>
</dbReference>
<dbReference type="GO" id="GO:0051536">
    <property type="term" value="F:iron-sulfur cluster binding"/>
    <property type="evidence" value="ECO:0000318"/>
    <property type="project" value="GO_Central"/>
</dbReference>
<dbReference type="GO" id="GO:0046872">
    <property type="term" value="F:metal ion binding"/>
    <property type="evidence" value="ECO:0007669"/>
    <property type="project" value="UniProtKB-KW"/>
</dbReference>
<dbReference type="GO" id="GO:0030030">
    <property type="term" value="P:cell projection organization"/>
    <property type="evidence" value="ECO:0007669"/>
    <property type="project" value="UniProtKB-KW"/>
</dbReference>
<dbReference type="GO" id="GO:0016226">
    <property type="term" value="P:iron-sulfur cluster assembly"/>
    <property type="evidence" value="ECO:0000318"/>
    <property type="project" value="GO_Central"/>
</dbReference>
<dbReference type="CDD" id="cd02037">
    <property type="entry name" value="Mrp_NBP35"/>
    <property type="match status" value="1"/>
</dbReference>
<dbReference type="FunFam" id="3.40.50.300:FF:000796">
    <property type="entry name" value="Cytosolic Fe-S cluster assembly factor NUBP2"/>
    <property type="match status" value="1"/>
</dbReference>
<dbReference type="Gene3D" id="3.40.50.300">
    <property type="entry name" value="P-loop containing nucleotide triphosphate hydrolases"/>
    <property type="match status" value="1"/>
</dbReference>
<dbReference type="HAMAP" id="MF_02040">
    <property type="entry name" value="Mrp_NBP35"/>
    <property type="match status" value="1"/>
</dbReference>
<dbReference type="HAMAP" id="MF_03039">
    <property type="entry name" value="NUBP2"/>
    <property type="match status" value="1"/>
</dbReference>
<dbReference type="InterPro" id="IPR000808">
    <property type="entry name" value="Mrp-like_CS"/>
</dbReference>
<dbReference type="InterPro" id="IPR019591">
    <property type="entry name" value="Mrp/NBP35_ATP-bd"/>
</dbReference>
<dbReference type="InterPro" id="IPR028600">
    <property type="entry name" value="NUBP2/Cfd1_eukaryotes"/>
</dbReference>
<dbReference type="InterPro" id="IPR027417">
    <property type="entry name" value="P-loop_NTPase"/>
</dbReference>
<dbReference type="InterPro" id="IPR033756">
    <property type="entry name" value="YlxH/NBP35"/>
</dbReference>
<dbReference type="PANTHER" id="PTHR23264:SF19">
    <property type="entry name" value="CYTOSOLIC FE-S CLUSTER ASSEMBLY FACTOR NUBP2"/>
    <property type="match status" value="1"/>
</dbReference>
<dbReference type="PANTHER" id="PTHR23264">
    <property type="entry name" value="NUCLEOTIDE-BINDING PROTEIN NBP35 YEAST -RELATED"/>
    <property type="match status" value="1"/>
</dbReference>
<dbReference type="Pfam" id="PF10609">
    <property type="entry name" value="ParA"/>
    <property type="match status" value="1"/>
</dbReference>
<dbReference type="SUPFAM" id="SSF52540">
    <property type="entry name" value="P-loop containing nucleoside triphosphate hydrolases"/>
    <property type="match status" value="1"/>
</dbReference>
<dbReference type="PROSITE" id="PS01215">
    <property type="entry name" value="MRP"/>
    <property type="match status" value="1"/>
</dbReference>
<comment type="function">
    <text evidence="1 3">Component of the cytosolic iron-sulfur (Fe/S) protein assembly (CIA) machinery. Required for maturation of extramitochondrial Fe-S proteins. The NUBP1-NUBP2 heterotetramer forms a Fe-S scaffold complex, mediating the de novo assembly of an Fe-S cluster and its transfer to target apoproteins. Negatively regulates cilium formation and structure.</text>
</comment>
<comment type="cofactor">
    <cofactor evidence="3">
        <name>[4Fe-4S] cluster</name>
        <dbReference type="ChEBI" id="CHEBI:49883"/>
    </cofactor>
    <text evidence="3">Binds 4 [4Fe-4S] clusters per heterotetramer. Contains two stable clusters in the N-termini of NUBP1 and two labile, bridging clusters between subunits of the NUBP1-NUBP2 heterotetramer.</text>
</comment>
<comment type="subunit">
    <text evidence="1 3">Heterotetramer of 2 NUBP1 and 2 NUBP2 chains. Interacts with KIFC1. Interacts with NUBP1.</text>
</comment>
<comment type="subcellular location">
    <subcellularLocation>
        <location evidence="3">Nucleus</location>
    </subcellularLocation>
    <subcellularLocation>
        <location evidence="3">Cytoplasm</location>
        <location evidence="3">Cytoskeleton</location>
        <location evidence="3">Microtubule organizing center</location>
        <location evidence="3">Centrosome</location>
    </subcellularLocation>
    <subcellularLocation>
        <location evidence="1">Cytoplasm</location>
    </subcellularLocation>
    <subcellularLocation>
        <location evidence="1">Cytoplasm</location>
        <location evidence="1">Cytoskeleton</location>
        <location evidence="1">Cilium axoneme</location>
    </subcellularLocation>
    <subcellularLocation>
        <location evidence="1">Cytoplasm</location>
        <location evidence="1">Cytoskeleton</location>
        <location evidence="1">Microtubule organizing center</location>
        <location evidence="1">Centrosome</location>
        <location evidence="1">Centriole</location>
    </subcellularLocation>
    <subcellularLocation>
        <location evidence="1">Cytoplasm</location>
        <location evidence="1">Cytoskeleton</location>
        <location evidence="1">Microtubule organizing center</location>
    </subcellularLocation>
    <text evidence="1 3">Enriched at the centrosomes during mitosis. Enriched in centrioles of microtubule asters during prophase, prometaphase and telophase stages of mitosis (By similarity). Localized at centrioles and in the nucleus at interphase (By similarity). Colocalizes with nubp-1 at prometaphase (By similarity).</text>
</comment>
<comment type="similarity">
    <text evidence="3">Belongs to the Mrp/NBP35 ATP-binding proteins family. NUBP2/CFD1 subfamily.</text>
</comment>
<proteinExistence type="evidence at transcript level"/>
<reference key="1">
    <citation type="submission" date="2005-09" db="EMBL/GenBank/DDBJ databases">
        <authorList>
            <consortium name="NIH - Mammalian Gene Collection (MGC) project"/>
        </authorList>
    </citation>
    <scope>NUCLEOTIDE SEQUENCE [LARGE SCALE MRNA]</scope>
    <source>
        <strain>Hereford</strain>
        <tissue>Ascending colon</tissue>
    </source>
</reference>
<feature type="chain" id="PRO_0000288716" description="Cytosolic Fe-S cluster assembly factor NUBP2">
    <location>
        <begin position="1"/>
        <end position="271"/>
    </location>
</feature>
<feature type="binding site" evidence="3">
    <location>
        <begin position="22"/>
        <end position="29"/>
    </location>
    <ligand>
        <name>ATP</name>
        <dbReference type="ChEBI" id="CHEBI:30616"/>
    </ligand>
</feature>
<feature type="binding site" evidence="3">
    <location>
        <position position="196"/>
    </location>
    <ligand>
        <name>[4Fe-4S] cluster</name>
        <dbReference type="ChEBI" id="CHEBI:49883"/>
        <note>ligand shared between dimeric partners</note>
    </ligand>
</feature>
<feature type="binding site" evidence="3">
    <location>
        <position position="199"/>
    </location>
    <ligand>
        <name>[4Fe-4S] cluster</name>
        <dbReference type="ChEBI" id="CHEBI:49883"/>
        <note>ligand shared between dimeric partners</note>
    </ligand>
</feature>
<feature type="modified residue" description="N-acetylmethionine" evidence="2 3">
    <location>
        <position position="1"/>
    </location>
</feature>
<gene>
    <name evidence="3" type="primary">NUBP2</name>
</gene>
<name>NUBP2_BOVIN</name>
<evidence type="ECO:0000250" key="1">
    <source>
        <dbReference type="UniProtKB" id="Q9R061"/>
    </source>
</evidence>
<evidence type="ECO:0000250" key="2">
    <source>
        <dbReference type="UniProtKB" id="Q9Y5Y2"/>
    </source>
</evidence>
<evidence type="ECO:0000255" key="3">
    <source>
        <dbReference type="HAMAP-Rule" id="MF_03039"/>
    </source>
</evidence>
<organism>
    <name type="scientific">Bos taurus</name>
    <name type="common">Bovine</name>
    <dbReference type="NCBI Taxonomy" id="9913"/>
    <lineage>
        <taxon>Eukaryota</taxon>
        <taxon>Metazoa</taxon>
        <taxon>Chordata</taxon>
        <taxon>Craniata</taxon>
        <taxon>Vertebrata</taxon>
        <taxon>Euteleostomi</taxon>
        <taxon>Mammalia</taxon>
        <taxon>Eutheria</taxon>
        <taxon>Laurasiatheria</taxon>
        <taxon>Artiodactyla</taxon>
        <taxon>Ruminantia</taxon>
        <taxon>Pecora</taxon>
        <taxon>Bovidae</taxon>
        <taxon>Bovinae</taxon>
        <taxon>Bos</taxon>
    </lineage>
</organism>